<organism>
    <name type="scientific">Chlorobium phaeovibrioides (strain DSM 265 / 1930)</name>
    <name type="common">Prosthecochloris vibrioformis (strain DSM 265)</name>
    <dbReference type="NCBI Taxonomy" id="290318"/>
    <lineage>
        <taxon>Bacteria</taxon>
        <taxon>Pseudomonadati</taxon>
        <taxon>Chlorobiota</taxon>
        <taxon>Chlorobiia</taxon>
        <taxon>Chlorobiales</taxon>
        <taxon>Chlorobiaceae</taxon>
        <taxon>Chlorobium/Pelodictyon group</taxon>
        <taxon>Chlorobium</taxon>
    </lineage>
</organism>
<gene>
    <name evidence="1" type="primary">acpS</name>
    <name type="ordered locus">Cvib_0336</name>
</gene>
<keyword id="KW-0963">Cytoplasm</keyword>
<keyword id="KW-0275">Fatty acid biosynthesis</keyword>
<keyword id="KW-0276">Fatty acid metabolism</keyword>
<keyword id="KW-0444">Lipid biosynthesis</keyword>
<keyword id="KW-0443">Lipid metabolism</keyword>
<keyword id="KW-0460">Magnesium</keyword>
<keyword id="KW-0479">Metal-binding</keyword>
<keyword id="KW-0808">Transferase</keyword>
<name>ACPS_CHLPM</name>
<dbReference type="EC" id="2.7.8.7" evidence="1"/>
<dbReference type="EMBL" id="CP000607">
    <property type="protein sequence ID" value="ABP36358.1"/>
    <property type="molecule type" value="Genomic_DNA"/>
</dbReference>
<dbReference type="SMR" id="A4SCZ9"/>
<dbReference type="STRING" id="290318.Cvib_0336"/>
<dbReference type="KEGG" id="pvi:Cvib_0336"/>
<dbReference type="eggNOG" id="COG0736">
    <property type="taxonomic scope" value="Bacteria"/>
</dbReference>
<dbReference type="HOGENOM" id="CLU_089696_0_2_10"/>
<dbReference type="OrthoDB" id="517356at2"/>
<dbReference type="GO" id="GO:0005737">
    <property type="term" value="C:cytoplasm"/>
    <property type="evidence" value="ECO:0007669"/>
    <property type="project" value="UniProtKB-SubCell"/>
</dbReference>
<dbReference type="GO" id="GO:0008897">
    <property type="term" value="F:holo-[acyl-carrier-protein] synthase activity"/>
    <property type="evidence" value="ECO:0007669"/>
    <property type="project" value="UniProtKB-UniRule"/>
</dbReference>
<dbReference type="GO" id="GO:0000287">
    <property type="term" value="F:magnesium ion binding"/>
    <property type="evidence" value="ECO:0007669"/>
    <property type="project" value="UniProtKB-UniRule"/>
</dbReference>
<dbReference type="GO" id="GO:0006633">
    <property type="term" value="P:fatty acid biosynthetic process"/>
    <property type="evidence" value="ECO:0007669"/>
    <property type="project" value="UniProtKB-UniRule"/>
</dbReference>
<dbReference type="Gene3D" id="3.90.470.20">
    <property type="entry name" value="4'-phosphopantetheinyl transferase domain"/>
    <property type="match status" value="1"/>
</dbReference>
<dbReference type="HAMAP" id="MF_00101">
    <property type="entry name" value="AcpS"/>
    <property type="match status" value="1"/>
</dbReference>
<dbReference type="InterPro" id="IPR008278">
    <property type="entry name" value="4-PPantetheinyl_Trfase_dom"/>
</dbReference>
<dbReference type="InterPro" id="IPR037143">
    <property type="entry name" value="4-PPantetheinyl_Trfase_dom_sf"/>
</dbReference>
<dbReference type="InterPro" id="IPR002582">
    <property type="entry name" value="ACPS"/>
</dbReference>
<dbReference type="InterPro" id="IPR004568">
    <property type="entry name" value="Ppantetheine-prot_Trfase_dom"/>
</dbReference>
<dbReference type="NCBIfam" id="TIGR00516">
    <property type="entry name" value="acpS"/>
    <property type="match status" value="1"/>
</dbReference>
<dbReference type="NCBIfam" id="TIGR00556">
    <property type="entry name" value="pantethn_trn"/>
    <property type="match status" value="1"/>
</dbReference>
<dbReference type="NCBIfam" id="NF011257">
    <property type="entry name" value="PRK14663.1"/>
    <property type="match status" value="1"/>
</dbReference>
<dbReference type="Pfam" id="PF01648">
    <property type="entry name" value="ACPS"/>
    <property type="match status" value="1"/>
</dbReference>
<dbReference type="SUPFAM" id="SSF56214">
    <property type="entry name" value="4'-phosphopantetheinyl transferase"/>
    <property type="match status" value="1"/>
</dbReference>
<comment type="function">
    <text evidence="1">Transfers the 4'-phosphopantetheine moiety from coenzyme A to a Ser of acyl-carrier-protein.</text>
</comment>
<comment type="catalytic activity">
    <reaction evidence="1">
        <text>apo-[ACP] + CoA = holo-[ACP] + adenosine 3',5'-bisphosphate + H(+)</text>
        <dbReference type="Rhea" id="RHEA:12068"/>
        <dbReference type="Rhea" id="RHEA-COMP:9685"/>
        <dbReference type="Rhea" id="RHEA-COMP:9690"/>
        <dbReference type="ChEBI" id="CHEBI:15378"/>
        <dbReference type="ChEBI" id="CHEBI:29999"/>
        <dbReference type="ChEBI" id="CHEBI:57287"/>
        <dbReference type="ChEBI" id="CHEBI:58343"/>
        <dbReference type="ChEBI" id="CHEBI:64479"/>
        <dbReference type="EC" id="2.7.8.7"/>
    </reaction>
</comment>
<comment type="cofactor">
    <cofactor evidence="1">
        <name>Mg(2+)</name>
        <dbReference type="ChEBI" id="CHEBI:18420"/>
    </cofactor>
</comment>
<comment type="subcellular location">
    <subcellularLocation>
        <location evidence="1">Cytoplasm</location>
    </subcellularLocation>
</comment>
<comment type="similarity">
    <text evidence="1">Belongs to the P-Pant transferase superfamily. AcpS family.</text>
</comment>
<feature type="chain" id="PRO_1000075650" description="Holo-[acyl-carrier-protein] synthase">
    <location>
        <begin position="1"/>
        <end position="125"/>
    </location>
</feature>
<feature type="binding site" evidence="1">
    <location>
        <position position="6"/>
    </location>
    <ligand>
        <name>Mg(2+)</name>
        <dbReference type="ChEBI" id="CHEBI:18420"/>
    </ligand>
</feature>
<feature type="binding site" evidence="1">
    <location>
        <position position="55"/>
    </location>
    <ligand>
        <name>Mg(2+)</name>
        <dbReference type="ChEBI" id="CHEBI:18420"/>
    </ligand>
</feature>
<sequence>MEIGVDIVELERIERAHNRYGRKFLEKFMTQPEIELCLAKPSPVASIAGRFAAKEAVVKALGTGISGGVFWKSFEVLNDSRGRPVVTLLDKACFPPGCVIKISISHDRHSAIAAALLQYKTRGRC</sequence>
<protein>
    <recommendedName>
        <fullName evidence="1">Holo-[acyl-carrier-protein] synthase</fullName>
        <shortName evidence="1">Holo-ACP synthase</shortName>
        <ecNumber evidence="1">2.7.8.7</ecNumber>
    </recommendedName>
    <alternativeName>
        <fullName evidence="1">4'-phosphopantetheinyl transferase AcpS</fullName>
    </alternativeName>
</protein>
<proteinExistence type="inferred from homology"/>
<reference key="1">
    <citation type="submission" date="2007-03" db="EMBL/GenBank/DDBJ databases">
        <title>Complete sequence of Prosthecochloris vibrioformis DSM 265.</title>
        <authorList>
            <consortium name="US DOE Joint Genome Institute"/>
            <person name="Copeland A."/>
            <person name="Lucas S."/>
            <person name="Lapidus A."/>
            <person name="Barry K."/>
            <person name="Detter J.C."/>
            <person name="Glavina del Rio T."/>
            <person name="Hammon N."/>
            <person name="Israni S."/>
            <person name="Pitluck S."/>
            <person name="Schmutz J."/>
            <person name="Larimer F."/>
            <person name="Land M."/>
            <person name="Hauser L."/>
            <person name="Mikhailova N."/>
            <person name="Li T."/>
            <person name="Overmann J."/>
            <person name="Schuster S.C."/>
            <person name="Bryant D.A."/>
            <person name="Richardson P."/>
        </authorList>
    </citation>
    <scope>NUCLEOTIDE SEQUENCE [LARGE SCALE GENOMIC DNA]</scope>
    <source>
        <strain>DSM 265 / 1930</strain>
    </source>
</reference>
<accession>A4SCZ9</accession>
<evidence type="ECO:0000255" key="1">
    <source>
        <dbReference type="HAMAP-Rule" id="MF_00101"/>
    </source>
</evidence>